<gene>
    <name evidence="1" type="primary">rpmE</name>
    <name type="ordered locus">SeAg_B4342</name>
</gene>
<protein>
    <recommendedName>
        <fullName evidence="1">Large ribosomal subunit protein bL31</fullName>
    </recommendedName>
    <alternativeName>
        <fullName evidence="2">50S ribosomal protein L31</fullName>
    </alternativeName>
</protein>
<proteinExistence type="inferred from homology"/>
<sequence length="70" mass="7719">MKKGIHPNYVEITATCSCGNVIKTHSTVGHDLNLDVCGKCHPFFTGKQRVVDTGGRVERFNKRFSIPGSK</sequence>
<comment type="function">
    <text evidence="1">Binds the 23S rRNA.</text>
</comment>
<comment type="cofactor">
    <cofactor evidence="1">
        <name>Zn(2+)</name>
        <dbReference type="ChEBI" id="CHEBI:29105"/>
    </cofactor>
    <text evidence="1">Binds 1 zinc ion per subunit.</text>
</comment>
<comment type="subunit">
    <text evidence="1">Part of the 50S ribosomal subunit.</text>
</comment>
<comment type="similarity">
    <text evidence="1">Belongs to the bacterial ribosomal protein bL31 family. Type A subfamily.</text>
</comment>
<evidence type="ECO:0000255" key="1">
    <source>
        <dbReference type="HAMAP-Rule" id="MF_00501"/>
    </source>
</evidence>
<evidence type="ECO:0000305" key="2"/>
<dbReference type="EMBL" id="CP001138">
    <property type="protein sequence ID" value="ACH48754.1"/>
    <property type="molecule type" value="Genomic_DNA"/>
</dbReference>
<dbReference type="RefSeq" id="WP_000715284.1">
    <property type="nucleotide sequence ID" value="NC_011149.1"/>
</dbReference>
<dbReference type="SMR" id="B5F0S7"/>
<dbReference type="GeneID" id="66758349"/>
<dbReference type="KEGG" id="sea:SeAg_B4342"/>
<dbReference type="HOGENOM" id="CLU_114306_4_3_6"/>
<dbReference type="Proteomes" id="UP000008819">
    <property type="component" value="Chromosome"/>
</dbReference>
<dbReference type="GO" id="GO:1990904">
    <property type="term" value="C:ribonucleoprotein complex"/>
    <property type="evidence" value="ECO:0007669"/>
    <property type="project" value="UniProtKB-KW"/>
</dbReference>
<dbReference type="GO" id="GO:0005840">
    <property type="term" value="C:ribosome"/>
    <property type="evidence" value="ECO:0007669"/>
    <property type="project" value="UniProtKB-KW"/>
</dbReference>
<dbReference type="GO" id="GO:0046872">
    <property type="term" value="F:metal ion binding"/>
    <property type="evidence" value="ECO:0007669"/>
    <property type="project" value="UniProtKB-KW"/>
</dbReference>
<dbReference type="GO" id="GO:0019843">
    <property type="term" value="F:rRNA binding"/>
    <property type="evidence" value="ECO:0007669"/>
    <property type="project" value="UniProtKB-KW"/>
</dbReference>
<dbReference type="GO" id="GO:0003735">
    <property type="term" value="F:structural constituent of ribosome"/>
    <property type="evidence" value="ECO:0007669"/>
    <property type="project" value="InterPro"/>
</dbReference>
<dbReference type="GO" id="GO:0006412">
    <property type="term" value="P:translation"/>
    <property type="evidence" value="ECO:0007669"/>
    <property type="project" value="UniProtKB-UniRule"/>
</dbReference>
<dbReference type="FunFam" id="4.10.830.30:FF:000001">
    <property type="entry name" value="50S ribosomal protein L31"/>
    <property type="match status" value="1"/>
</dbReference>
<dbReference type="Gene3D" id="4.10.830.30">
    <property type="entry name" value="Ribosomal protein L31"/>
    <property type="match status" value="1"/>
</dbReference>
<dbReference type="HAMAP" id="MF_00501">
    <property type="entry name" value="Ribosomal_bL31_1"/>
    <property type="match status" value="1"/>
</dbReference>
<dbReference type="InterPro" id="IPR034704">
    <property type="entry name" value="Ribosomal_bL28/bL31-like_sf"/>
</dbReference>
<dbReference type="InterPro" id="IPR002150">
    <property type="entry name" value="Ribosomal_bL31"/>
</dbReference>
<dbReference type="InterPro" id="IPR027491">
    <property type="entry name" value="Ribosomal_bL31_A"/>
</dbReference>
<dbReference type="InterPro" id="IPR042105">
    <property type="entry name" value="Ribosomal_bL31_sf"/>
</dbReference>
<dbReference type="NCBIfam" id="TIGR00105">
    <property type="entry name" value="L31"/>
    <property type="match status" value="1"/>
</dbReference>
<dbReference type="NCBIfam" id="NF000612">
    <property type="entry name" value="PRK00019.1"/>
    <property type="match status" value="1"/>
</dbReference>
<dbReference type="NCBIfam" id="NF001809">
    <property type="entry name" value="PRK00528.1"/>
    <property type="match status" value="1"/>
</dbReference>
<dbReference type="PANTHER" id="PTHR33280">
    <property type="entry name" value="50S RIBOSOMAL PROTEIN L31, CHLOROPLASTIC"/>
    <property type="match status" value="1"/>
</dbReference>
<dbReference type="PANTHER" id="PTHR33280:SF6">
    <property type="entry name" value="LARGE RIBOSOMAL SUBUNIT PROTEIN BL31A"/>
    <property type="match status" value="1"/>
</dbReference>
<dbReference type="Pfam" id="PF01197">
    <property type="entry name" value="Ribosomal_L31"/>
    <property type="match status" value="1"/>
</dbReference>
<dbReference type="PRINTS" id="PR01249">
    <property type="entry name" value="RIBOSOMALL31"/>
</dbReference>
<dbReference type="SUPFAM" id="SSF143800">
    <property type="entry name" value="L28p-like"/>
    <property type="match status" value="1"/>
</dbReference>
<dbReference type="PROSITE" id="PS01143">
    <property type="entry name" value="RIBOSOMAL_L31"/>
    <property type="match status" value="1"/>
</dbReference>
<organism>
    <name type="scientific">Salmonella agona (strain SL483)</name>
    <dbReference type="NCBI Taxonomy" id="454166"/>
    <lineage>
        <taxon>Bacteria</taxon>
        <taxon>Pseudomonadati</taxon>
        <taxon>Pseudomonadota</taxon>
        <taxon>Gammaproteobacteria</taxon>
        <taxon>Enterobacterales</taxon>
        <taxon>Enterobacteriaceae</taxon>
        <taxon>Salmonella</taxon>
    </lineage>
</organism>
<feature type="chain" id="PRO_1000126714" description="Large ribosomal subunit protein bL31">
    <location>
        <begin position="1"/>
        <end position="70"/>
    </location>
</feature>
<feature type="binding site" evidence="1">
    <location>
        <position position="16"/>
    </location>
    <ligand>
        <name>Zn(2+)</name>
        <dbReference type="ChEBI" id="CHEBI:29105"/>
    </ligand>
</feature>
<feature type="binding site" evidence="1">
    <location>
        <position position="18"/>
    </location>
    <ligand>
        <name>Zn(2+)</name>
        <dbReference type="ChEBI" id="CHEBI:29105"/>
    </ligand>
</feature>
<feature type="binding site" evidence="1">
    <location>
        <position position="37"/>
    </location>
    <ligand>
        <name>Zn(2+)</name>
        <dbReference type="ChEBI" id="CHEBI:29105"/>
    </ligand>
</feature>
<feature type="binding site" evidence="1">
    <location>
        <position position="40"/>
    </location>
    <ligand>
        <name>Zn(2+)</name>
        <dbReference type="ChEBI" id="CHEBI:29105"/>
    </ligand>
</feature>
<reference key="1">
    <citation type="journal article" date="2011" name="J. Bacteriol.">
        <title>Comparative genomics of 28 Salmonella enterica isolates: evidence for CRISPR-mediated adaptive sublineage evolution.</title>
        <authorList>
            <person name="Fricke W.F."/>
            <person name="Mammel M.K."/>
            <person name="McDermott P.F."/>
            <person name="Tartera C."/>
            <person name="White D.G."/>
            <person name="Leclerc J.E."/>
            <person name="Ravel J."/>
            <person name="Cebula T.A."/>
        </authorList>
    </citation>
    <scope>NUCLEOTIDE SEQUENCE [LARGE SCALE GENOMIC DNA]</scope>
    <source>
        <strain>SL483</strain>
    </source>
</reference>
<accession>B5F0S7</accession>
<keyword id="KW-0479">Metal-binding</keyword>
<keyword id="KW-0687">Ribonucleoprotein</keyword>
<keyword id="KW-0689">Ribosomal protein</keyword>
<keyword id="KW-0694">RNA-binding</keyword>
<keyword id="KW-0699">rRNA-binding</keyword>
<keyword id="KW-0862">Zinc</keyword>
<name>RL31_SALA4</name>